<sequence>MSFTPTDYNAYDFANRRHIGPSPSEMEEMLRVVGVSSLDQLIEETVPASIRQETPLDWAPLAEHELLARMREVAAKNRVMTSLIGQGYYGTVTPPAIQRNILENPAWYTAYTPYQPEIAQGRLEALLNYQTMVADLTGLPVANASLLDEATAAAEAMTMAERASKSKARAFFVDADCHPQTISVIRTRAEPLGIEVIVGHPAQLVPEDVFGALFQYPGTYGLVRDFTRDIAALHEAKALAVVATDLLALCLLKEPGAMGADIAIGSSQRFGVPMGYGGPHAAFMSCKDDLKRSMPGRLVGVSVDARGNKAYRLALQTREQHIRREKATSNVCTAQALLAVMASFYAVFHGPRGLRAIAERVHLNTVRLATALKEAGARVSPEAFFDTITVEVGVGQAGILAAARHRGINLRKVGRDRVGISLDETTDAGVIARVLDAFGIHEPAPAKVGLGFPEPLLRETGYLSHPVFQMNRAESEMMRYMRRLSDRDLALDRAMIPLGSCTMKLNAAAEMMPITWPEFGTLHPFAPADQAAGYHEAIGDLAQRLCRITGYDAMSMQPNSGAQGEYAGLLTILAYHRARGDAERTICLIPVSAHGTNPASAQMAGMKVVVVKSAPNGDVDLEDFRDKAAAAGDRLAACMITYPSTHGVFEETVREVCRITHEHGGQVYIDGANMNAMVGLVQPGAIGGDVSHLNLHKTFAIPHGGGGPGMGPIGVKAHLAPYLPGHPEVTGPLTGGHDEAADEGPVSAAPYGSASILLISWAYCLMMGGEGLTQATRVAILNANYIAARLRGAYKVLFMGNRGRVAHECILDTRPFAEAGVTVDDIAKRLIDNGFHAPTMSWPVPGTLMVEPTESETKAEIDRFVAALLAIREEIRAVEEGEIAAADSPLRHAPHTVEDLVADWDRKYPREQGCFPPGSFRVDKYWPPVGRVDNAWGDRNLVCTCPPVESYSIAAQ</sequence>
<dbReference type="EC" id="1.4.4.2" evidence="1"/>
<dbReference type="EMBL" id="CP001150">
    <property type="protein sequence ID" value="ACM00371.1"/>
    <property type="molecule type" value="Genomic_DNA"/>
</dbReference>
<dbReference type="RefSeq" id="WP_011337303.1">
    <property type="nucleotide sequence ID" value="NC_011963.1"/>
</dbReference>
<dbReference type="SMR" id="B9KNU3"/>
<dbReference type="GeneID" id="67445967"/>
<dbReference type="KEGG" id="rsk:RSKD131_0511"/>
<dbReference type="HOGENOM" id="CLU_004620_3_2_5"/>
<dbReference type="GO" id="GO:0005829">
    <property type="term" value="C:cytosol"/>
    <property type="evidence" value="ECO:0007669"/>
    <property type="project" value="TreeGrafter"/>
</dbReference>
<dbReference type="GO" id="GO:0005960">
    <property type="term" value="C:glycine cleavage complex"/>
    <property type="evidence" value="ECO:0007669"/>
    <property type="project" value="TreeGrafter"/>
</dbReference>
<dbReference type="GO" id="GO:0016594">
    <property type="term" value="F:glycine binding"/>
    <property type="evidence" value="ECO:0007669"/>
    <property type="project" value="TreeGrafter"/>
</dbReference>
<dbReference type="GO" id="GO:0004375">
    <property type="term" value="F:glycine dehydrogenase (decarboxylating) activity"/>
    <property type="evidence" value="ECO:0007669"/>
    <property type="project" value="UniProtKB-EC"/>
</dbReference>
<dbReference type="GO" id="GO:0030170">
    <property type="term" value="F:pyridoxal phosphate binding"/>
    <property type="evidence" value="ECO:0007669"/>
    <property type="project" value="TreeGrafter"/>
</dbReference>
<dbReference type="GO" id="GO:0019464">
    <property type="term" value="P:glycine decarboxylation via glycine cleavage system"/>
    <property type="evidence" value="ECO:0007669"/>
    <property type="project" value="UniProtKB-UniRule"/>
</dbReference>
<dbReference type="CDD" id="cd00613">
    <property type="entry name" value="GDC-P"/>
    <property type="match status" value="2"/>
</dbReference>
<dbReference type="FunFam" id="3.40.640.10:FF:000005">
    <property type="entry name" value="Glycine dehydrogenase (decarboxylating), mitochondrial"/>
    <property type="match status" value="1"/>
</dbReference>
<dbReference type="FunFam" id="3.40.640.10:FF:000007">
    <property type="entry name" value="glycine dehydrogenase (Decarboxylating), mitochondrial"/>
    <property type="match status" value="1"/>
</dbReference>
<dbReference type="Gene3D" id="3.90.1150.10">
    <property type="entry name" value="Aspartate Aminotransferase, domain 1"/>
    <property type="match status" value="2"/>
</dbReference>
<dbReference type="Gene3D" id="3.40.640.10">
    <property type="entry name" value="Type I PLP-dependent aspartate aminotransferase-like (Major domain)"/>
    <property type="match status" value="2"/>
</dbReference>
<dbReference type="HAMAP" id="MF_00711">
    <property type="entry name" value="GcvP"/>
    <property type="match status" value="1"/>
</dbReference>
<dbReference type="InterPro" id="IPR003437">
    <property type="entry name" value="GcvP"/>
</dbReference>
<dbReference type="InterPro" id="IPR049316">
    <property type="entry name" value="GDC-P_C"/>
</dbReference>
<dbReference type="InterPro" id="IPR049315">
    <property type="entry name" value="GDC-P_N"/>
</dbReference>
<dbReference type="InterPro" id="IPR020581">
    <property type="entry name" value="GDC_P"/>
</dbReference>
<dbReference type="InterPro" id="IPR015424">
    <property type="entry name" value="PyrdxlP-dep_Trfase"/>
</dbReference>
<dbReference type="InterPro" id="IPR015421">
    <property type="entry name" value="PyrdxlP-dep_Trfase_major"/>
</dbReference>
<dbReference type="InterPro" id="IPR015422">
    <property type="entry name" value="PyrdxlP-dep_Trfase_small"/>
</dbReference>
<dbReference type="NCBIfam" id="TIGR00461">
    <property type="entry name" value="gcvP"/>
    <property type="match status" value="1"/>
</dbReference>
<dbReference type="NCBIfam" id="NF003346">
    <property type="entry name" value="PRK04366.1"/>
    <property type="match status" value="1"/>
</dbReference>
<dbReference type="PANTHER" id="PTHR11773:SF1">
    <property type="entry name" value="GLYCINE DEHYDROGENASE (DECARBOXYLATING), MITOCHONDRIAL"/>
    <property type="match status" value="1"/>
</dbReference>
<dbReference type="PANTHER" id="PTHR11773">
    <property type="entry name" value="GLYCINE DEHYDROGENASE, DECARBOXYLATING"/>
    <property type="match status" value="1"/>
</dbReference>
<dbReference type="Pfam" id="PF21478">
    <property type="entry name" value="GcvP2_C"/>
    <property type="match status" value="1"/>
</dbReference>
<dbReference type="Pfam" id="PF02347">
    <property type="entry name" value="GDC-P"/>
    <property type="match status" value="2"/>
</dbReference>
<dbReference type="SUPFAM" id="SSF53383">
    <property type="entry name" value="PLP-dependent transferases"/>
    <property type="match status" value="2"/>
</dbReference>
<evidence type="ECO:0000255" key="1">
    <source>
        <dbReference type="HAMAP-Rule" id="MF_00711"/>
    </source>
</evidence>
<gene>
    <name evidence="1" type="primary">gcvP</name>
    <name type="ordered locus">RSKD131_0511</name>
</gene>
<reference key="1">
    <citation type="journal article" date="2009" name="J. Bacteriol.">
        <title>Complete genome sequence of Rhodobacter sphaeroides KD131.</title>
        <authorList>
            <person name="Lim S.-K."/>
            <person name="Kim S.J."/>
            <person name="Cha S.H."/>
            <person name="Oh Y.-K."/>
            <person name="Rhee H.-J."/>
            <person name="Kim M.-S."/>
            <person name="Lee J.K."/>
        </authorList>
    </citation>
    <scope>NUCLEOTIDE SEQUENCE [LARGE SCALE GENOMIC DNA]</scope>
    <source>
        <strain>KD131 / KCTC 12085</strain>
    </source>
</reference>
<proteinExistence type="inferred from homology"/>
<protein>
    <recommendedName>
        <fullName evidence="1">Glycine dehydrogenase (decarboxylating)</fullName>
        <ecNumber evidence="1">1.4.4.2</ecNumber>
    </recommendedName>
    <alternativeName>
        <fullName evidence="1">Glycine cleavage system P-protein</fullName>
    </alternativeName>
    <alternativeName>
        <fullName evidence="1">Glycine decarboxylase</fullName>
    </alternativeName>
    <alternativeName>
        <fullName evidence="1">Glycine dehydrogenase (aminomethyl-transferring)</fullName>
    </alternativeName>
</protein>
<name>GCSP_CERSK</name>
<comment type="function">
    <text evidence="1">The glycine cleavage system catalyzes the degradation of glycine. The P protein binds the alpha-amino group of glycine through its pyridoxal phosphate cofactor; CO(2) is released and the remaining methylamine moiety is then transferred to the lipoamide cofactor of the H protein.</text>
</comment>
<comment type="catalytic activity">
    <reaction evidence="1">
        <text>N(6)-[(R)-lipoyl]-L-lysyl-[glycine-cleavage complex H protein] + glycine + H(+) = N(6)-[(R)-S(8)-aminomethyldihydrolipoyl]-L-lysyl-[glycine-cleavage complex H protein] + CO2</text>
        <dbReference type="Rhea" id="RHEA:24304"/>
        <dbReference type="Rhea" id="RHEA-COMP:10494"/>
        <dbReference type="Rhea" id="RHEA-COMP:10495"/>
        <dbReference type="ChEBI" id="CHEBI:15378"/>
        <dbReference type="ChEBI" id="CHEBI:16526"/>
        <dbReference type="ChEBI" id="CHEBI:57305"/>
        <dbReference type="ChEBI" id="CHEBI:83099"/>
        <dbReference type="ChEBI" id="CHEBI:83143"/>
        <dbReference type="EC" id="1.4.4.2"/>
    </reaction>
</comment>
<comment type="cofactor">
    <cofactor evidence="1">
        <name>pyridoxal 5'-phosphate</name>
        <dbReference type="ChEBI" id="CHEBI:597326"/>
    </cofactor>
</comment>
<comment type="subunit">
    <text evidence="1">The glycine cleavage system is composed of four proteins: P, T, L and H.</text>
</comment>
<comment type="similarity">
    <text evidence="1">Belongs to the GcvP family.</text>
</comment>
<accession>B9KNU3</accession>
<feature type="chain" id="PRO_1000147969" description="Glycine dehydrogenase (decarboxylating)">
    <location>
        <begin position="1"/>
        <end position="956"/>
    </location>
</feature>
<feature type="modified residue" description="N6-(pyridoxal phosphate)lysine" evidence="1">
    <location>
        <position position="697"/>
    </location>
</feature>
<organism>
    <name type="scientific">Cereibacter sphaeroides (strain KD131 / KCTC 12085)</name>
    <name type="common">Rhodobacter sphaeroides</name>
    <dbReference type="NCBI Taxonomy" id="557760"/>
    <lineage>
        <taxon>Bacteria</taxon>
        <taxon>Pseudomonadati</taxon>
        <taxon>Pseudomonadota</taxon>
        <taxon>Alphaproteobacteria</taxon>
        <taxon>Rhodobacterales</taxon>
        <taxon>Paracoccaceae</taxon>
        <taxon>Cereibacter</taxon>
    </lineage>
</organism>
<keyword id="KW-0560">Oxidoreductase</keyword>
<keyword id="KW-0663">Pyridoxal phosphate</keyword>